<keyword id="KW-0031">Aminopeptidase</keyword>
<keyword id="KW-0963">Cytoplasm</keyword>
<keyword id="KW-0378">Hydrolase</keyword>
<keyword id="KW-0464">Manganese</keyword>
<keyword id="KW-0479">Metal-binding</keyword>
<keyword id="KW-0645">Protease</keyword>
<organism>
    <name type="scientific">Escherichia coli (strain UTI89 / UPEC)</name>
    <dbReference type="NCBI Taxonomy" id="364106"/>
    <lineage>
        <taxon>Bacteria</taxon>
        <taxon>Pseudomonadati</taxon>
        <taxon>Pseudomonadota</taxon>
        <taxon>Gammaproteobacteria</taxon>
        <taxon>Enterobacterales</taxon>
        <taxon>Enterobacteriaceae</taxon>
        <taxon>Escherichia</taxon>
    </lineage>
</organism>
<comment type="function">
    <text evidence="1">Probably plays an important role in intracellular peptide degradation.</text>
</comment>
<comment type="catalytic activity">
    <reaction evidence="1">
        <text>Release of an N-terminal amino acid, Xaa, from a peptide or arylamide. Xaa is preferably Glu or Asp but may be other amino acids, including Leu, Met, His, Cys and Gln.</text>
        <dbReference type="EC" id="3.4.11.23"/>
    </reaction>
</comment>
<comment type="cofactor">
    <cofactor evidence="1">
        <name>Mn(2+)</name>
        <dbReference type="ChEBI" id="CHEBI:29035"/>
    </cofactor>
    <text evidence="1">Binds 2 manganese ions per subunit.</text>
</comment>
<comment type="subunit">
    <text evidence="1">Homohexamer.</text>
</comment>
<comment type="subcellular location">
    <subcellularLocation>
        <location evidence="1">Cytoplasm</location>
    </subcellularLocation>
</comment>
<comment type="similarity">
    <text evidence="1">Belongs to the peptidase M17 family.</text>
</comment>
<proteinExistence type="inferred from homology"/>
<feature type="chain" id="PRO_0000258499" description="Peptidase B">
    <location>
        <begin position="1"/>
        <end position="427"/>
    </location>
</feature>
<feature type="active site" evidence="1">
    <location>
        <position position="207"/>
    </location>
</feature>
<feature type="active site" evidence="1">
    <location>
        <position position="281"/>
    </location>
</feature>
<feature type="binding site" evidence="1">
    <location>
        <position position="195"/>
    </location>
    <ligand>
        <name>Mn(2+)</name>
        <dbReference type="ChEBI" id="CHEBI:29035"/>
        <label>2</label>
    </ligand>
</feature>
<feature type="binding site" evidence="1">
    <location>
        <position position="200"/>
    </location>
    <ligand>
        <name>Mn(2+)</name>
        <dbReference type="ChEBI" id="CHEBI:29035"/>
        <label>1</label>
    </ligand>
</feature>
<feature type="binding site" evidence="1">
    <location>
        <position position="200"/>
    </location>
    <ligand>
        <name>Mn(2+)</name>
        <dbReference type="ChEBI" id="CHEBI:29035"/>
        <label>2</label>
    </ligand>
</feature>
<feature type="binding site" evidence="1">
    <location>
        <position position="218"/>
    </location>
    <ligand>
        <name>Mn(2+)</name>
        <dbReference type="ChEBI" id="CHEBI:29035"/>
        <label>2</label>
    </ligand>
</feature>
<feature type="binding site" evidence="1">
    <location>
        <position position="277"/>
    </location>
    <ligand>
        <name>Mn(2+)</name>
        <dbReference type="ChEBI" id="CHEBI:29035"/>
        <label>1</label>
    </ligand>
</feature>
<feature type="binding site" evidence="1">
    <location>
        <position position="279"/>
    </location>
    <ligand>
        <name>Mn(2+)</name>
        <dbReference type="ChEBI" id="CHEBI:29035"/>
        <label>1</label>
    </ligand>
</feature>
<feature type="binding site" evidence="1">
    <location>
        <position position="279"/>
    </location>
    <ligand>
        <name>Mn(2+)</name>
        <dbReference type="ChEBI" id="CHEBI:29035"/>
        <label>2</label>
    </ligand>
</feature>
<reference key="1">
    <citation type="journal article" date="2006" name="Proc. Natl. Acad. Sci. U.S.A.">
        <title>Identification of genes subject to positive selection in uropathogenic strains of Escherichia coli: a comparative genomics approach.</title>
        <authorList>
            <person name="Chen S.L."/>
            <person name="Hung C.-S."/>
            <person name="Xu J."/>
            <person name="Reigstad C.S."/>
            <person name="Magrini V."/>
            <person name="Sabo A."/>
            <person name="Blasiar D."/>
            <person name="Bieri T."/>
            <person name="Meyer R.R."/>
            <person name="Ozersky P."/>
            <person name="Armstrong J.R."/>
            <person name="Fulton R.S."/>
            <person name="Latreille J.P."/>
            <person name="Spieth J."/>
            <person name="Hooton T.M."/>
            <person name="Mardis E.R."/>
            <person name="Hultgren S.J."/>
            <person name="Gordon J.I."/>
        </authorList>
    </citation>
    <scope>NUCLEOTIDE SEQUENCE [LARGE SCALE GENOMIC DNA]</scope>
    <source>
        <strain>UTI89 / UPEC</strain>
    </source>
</reference>
<protein>
    <recommendedName>
        <fullName evidence="1">Peptidase B</fullName>
        <ecNumber evidence="1">3.4.11.23</ecNumber>
    </recommendedName>
    <alternativeName>
        <fullName evidence="1">Aminopeptidase B</fullName>
    </alternativeName>
</protein>
<name>PEPB_ECOUT</name>
<gene>
    <name evidence="1" type="primary">pepB</name>
    <name type="ordered locus">UTI89_C2845</name>
</gene>
<evidence type="ECO:0000255" key="1">
    <source>
        <dbReference type="HAMAP-Rule" id="MF_00504"/>
    </source>
</evidence>
<sequence>MTEAMKITLSTQPADARWGEKATYSINNDGITLHLNGADDLGLIQRAARKIDGLGIKHVQLSGEGWDADRCWAFWQGYKAPKGIRKVEWPDLDDAQRQELDNRLMIIDWVRDTINAPAEELGPSQLAQRAVDLISNVAGDRVTYRITKGEDLREQGYMGLHTVGRGSERSPVLLALDYNPTGDKEAPVYACLVGKGITFDSGGYSIKQTAFMDSMKSDMGGAATVTGALAFAITRGLNKRVKLFLCCADNLISGNAFKLGDIITYRNGKKVEVMNTDAEGRLVLADGLIDASAQKPELIIDAATLTGAAKTALGNDYHALFSFDDALAGRLLASAAQENEPFWRLPLAEFHRNQLPSNFAELNNTGSAAYPAGASTAAGFLSHFVENYQQGWLHIDCSATYRKAPVEQWSAGATGLGVRTIANLLTA</sequence>
<dbReference type="EC" id="3.4.11.23" evidence="1"/>
<dbReference type="EMBL" id="CP000243">
    <property type="protein sequence ID" value="ABE08305.1"/>
    <property type="molecule type" value="Genomic_DNA"/>
</dbReference>
<dbReference type="RefSeq" id="WP_000133562.1">
    <property type="nucleotide sequence ID" value="NZ_CP064825.1"/>
</dbReference>
<dbReference type="SMR" id="Q1R8K9"/>
<dbReference type="MEROPS" id="M17.004"/>
<dbReference type="KEGG" id="eci:UTI89_C2845"/>
<dbReference type="HOGENOM" id="CLU_013734_7_1_6"/>
<dbReference type="Proteomes" id="UP000001952">
    <property type="component" value="Chromosome"/>
</dbReference>
<dbReference type="GO" id="GO:0005737">
    <property type="term" value="C:cytoplasm"/>
    <property type="evidence" value="ECO:0007669"/>
    <property type="project" value="UniProtKB-SubCell"/>
</dbReference>
<dbReference type="GO" id="GO:0030145">
    <property type="term" value="F:manganese ion binding"/>
    <property type="evidence" value="ECO:0007669"/>
    <property type="project" value="UniProtKB-UniRule"/>
</dbReference>
<dbReference type="GO" id="GO:0070006">
    <property type="term" value="F:metalloaminopeptidase activity"/>
    <property type="evidence" value="ECO:0007669"/>
    <property type="project" value="InterPro"/>
</dbReference>
<dbReference type="GO" id="GO:0006508">
    <property type="term" value="P:proteolysis"/>
    <property type="evidence" value="ECO:0007669"/>
    <property type="project" value="UniProtKB-UniRule"/>
</dbReference>
<dbReference type="CDD" id="cd00433">
    <property type="entry name" value="Peptidase_M17"/>
    <property type="match status" value="1"/>
</dbReference>
<dbReference type="FunFam" id="3.40.630.10:FF:000037">
    <property type="entry name" value="Peptidase B"/>
    <property type="match status" value="1"/>
</dbReference>
<dbReference type="Gene3D" id="3.40.630.10">
    <property type="entry name" value="Zn peptidases"/>
    <property type="match status" value="1"/>
</dbReference>
<dbReference type="HAMAP" id="MF_00504">
    <property type="entry name" value="Aminopeptidase_M17"/>
    <property type="match status" value="1"/>
</dbReference>
<dbReference type="InterPro" id="IPR011356">
    <property type="entry name" value="Leucine_aapep/pepB"/>
</dbReference>
<dbReference type="InterPro" id="IPR047620">
    <property type="entry name" value="M17_PepB-like_N"/>
</dbReference>
<dbReference type="InterPro" id="IPR008330">
    <property type="entry name" value="Pept_M17_PepB"/>
</dbReference>
<dbReference type="InterPro" id="IPR000819">
    <property type="entry name" value="Peptidase_M17_C"/>
</dbReference>
<dbReference type="NCBIfam" id="NF003450">
    <property type="entry name" value="PRK05015.1"/>
    <property type="match status" value="1"/>
</dbReference>
<dbReference type="PANTHER" id="PTHR11963">
    <property type="entry name" value="LEUCINE AMINOPEPTIDASE-RELATED"/>
    <property type="match status" value="1"/>
</dbReference>
<dbReference type="PANTHER" id="PTHR11963:SF20">
    <property type="entry name" value="PEPTIDASE B"/>
    <property type="match status" value="1"/>
</dbReference>
<dbReference type="Pfam" id="PF12404">
    <property type="entry name" value="DUF3663"/>
    <property type="match status" value="1"/>
</dbReference>
<dbReference type="Pfam" id="PF00883">
    <property type="entry name" value="Peptidase_M17"/>
    <property type="match status" value="1"/>
</dbReference>
<dbReference type="PIRSF" id="PIRSF036388">
    <property type="entry name" value="Ctsl_amnpptdse_B"/>
    <property type="match status" value="1"/>
</dbReference>
<dbReference type="PRINTS" id="PR00481">
    <property type="entry name" value="LAMNOPPTDASE"/>
</dbReference>
<dbReference type="SUPFAM" id="SSF53187">
    <property type="entry name" value="Zn-dependent exopeptidases"/>
    <property type="match status" value="1"/>
</dbReference>
<dbReference type="PROSITE" id="PS00631">
    <property type="entry name" value="CYTOSOL_AP"/>
    <property type="match status" value="1"/>
</dbReference>
<accession>Q1R8K9</accession>